<evidence type="ECO:0000250" key="1"/>
<evidence type="ECO:0000250" key="2">
    <source>
        <dbReference type="UniProtKB" id="P27773"/>
    </source>
</evidence>
<evidence type="ECO:0000250" key="3">
    <source>
        <dbReference type="UniProtKB" id="P30101"/>
    </source>
</evidence>
<evidence type="ECO:0000255" key="4">
    <source>
        <dbReference type="PROSITE-ProRule" id="PRU00691"/>
    </source>
</evidence>
<evidence type="ECO:0000256" key="5">
    <source>
        <dbReference type="SAM" id="MobiDB-lite"/>
    </source>
</evidence>
<evidence type="ECO:0000269" key="6">
    <source>
    </source>
</evidence>
<evidence type="ECO:0000269" key="7">
    <source>
    </source>
</evidence>
<evidence type="ECO:0000269" key="8">
    <source>
    </source>
</evidence>
<evidence type="ECO:0000269" key="9">
    <source>
    </source>
</evidence>
<evidence type="ECO:0000305" key="10"/>
<evidence type="ECO:0000305" key="11">
    <source>
    </source>
</evidence>
<reference key="1">
    <citation type="journal article" date="1988" name="Nature">
        <title>Molecular cloning and complete amino-acid sequence of form-I phosphoinositide-specific phospholipase C.</title>
        <authorList>
            <person name="Bennett C.F."/>
            <person name="Balcarek J.M."/>
            <person name="Varrichio A."/>
            <person name="Crooke S.T."/>
        </authorList>
    </citation>
    <scope>NUCLEOTIDE SEQUENCE [MRNA]</scope>
</reference>
<reference key="2">
    <citation type="journal article" date="1995" name="Proc. Jpn. Acad., B, Phys. Biol. Sci.">
        <title>Role of novel microsomal cysteine proteases.</title>
        <authorList>
            <person name="Kito M."/>
            <person name="Urade R."/>
        </authorList>
    </citation>
    <scope>NUCLEOTIDE SEQUENCE [MRNA]</scope>
</reference>
<reference key="3">
    <citation type="journal article" date="2004" name="Genome Res.">
        <title>The status, quality, and expansion of the NIH full-length cDNA project: the Mammalian Gene Collection (MGC).</title>
        <authorList>
            <consortium name="The MGC Project Team"/>
        </authorList>
    </citation>
    <scope>NUCLEOTIDE SEQUENCE [LARGE SCALE MRNA]</scope>
    <source>
        <tissue>Prostate</tissue>
    </source>
</reference>
<reference key="4">
    <citation type="journal article" date="1991" name="Biochem. Biophys. Res. Commun.">
        <title>A metabolite of halothane covalently binds to an endoplasmic reticulum protein that is highly homologous to phosphatidylinositol-specific phospholipase C-alpha but has no activity.</title>
        <authorList>
            <person name="Martin J.L."/>
            <person name="Pumford N.R."/>
            <person name="Larosa A.C."/>
            <person name="Martin B.M."/>
            <person name="Gonzaga H.M.S."/>
            <person name="Beaven M.A."/>
            <person name="Pohl L.R."/>
        </authorList>
    </citation>
    <scope>PARTIAL PROTEIN SEQUENCE</scope>
    <source>
        <tissue>Liver</tissue>
    </source>
</reference>
<reference key="5">
    <citation type="journal article" date="1990" name="Science">
        <title>HIP-70: a protein induced by estrogen in the brain and LH-RH in the pituitary.</title>
        <authorList>
            <person name="Mobbs C.V."/>
            <person name="Fink G."/>
            <person name="Pfaff D.W."/>
        </authorList>
    </citation>
    <scope>PROTEIN SEQUENCE OF 26-43</scope>
    <source>
        <tissue>Brain</tissue>
        <tissue>Pituitary</tissue>
    </source>
</reference>
<reference key="6">
    <citation type="journal article" date="1991" name="J. Biol. Chem.">
        <title>Purification and characterization of a new isozyme of thiol:protein-disulfide oxidoreductase from rat hepatic microsomes. Relationship of this isozyme to cytosolic phosphatidylinositol-specific phospholipase C form 1A.</title>
        <authorList>
            <person name="Srivastava S.P."/>
            <person name="Chen N.Q."/>
            <person name="Liu Y.X."/>
            <person name="Holtzman J.L."/>
        </authorList>
    </citation>
    <scope>PROTEIN SEQUENCE OF 25-54; 258-269; 285-310; 347-350; 412-419 AND 434-463</scope>
    <source>
        <tissue>Liver</tissue>
    </source>
</reference>
<reference key="7">
    <citation type="journal article" date="1992" name="J. Biol. Chem.">
        <title>Protein degradation by the phosphoinositide-specific phospholipase C-alpha family from rat liver endoplasmic reticulum.</title>
        <authorList>
            <person name="Urade R."/>
            <person name="Nasu M."/>
            <person name="Moriyama T."/>
            <person name="Wada K."/>
            <person name="Kito M."/>
        </authorList>
    </citation>
    <scope>PROTEIN SEQUENCE OF 26-34; 174-193; 433-446 AND 448-458</scope>
</reference>
<reference key="8">
    <citation type="submission" date="2006-12" db="UniProtKB">
        <authorList>
            <person name="Lubec G."/>
            <person name="Afjehi-Sadat L."/>
        </authorList>
    </citation>
    <scope>PROTEIN SEQUENCE OF 105-119; 148-161; 184-214; 259-271; 306-329; 336-344; 352-363; 449-460 AND 472-482</scope>
    <scope>IDENTIFICATION BY MASS SPECTROMETRY</scope>
    <source>
        <strain>Sprague-Dawley</strain>
        <tissue>Spinal cord</tissue>
    </source>
</reference>
<reference key="9">
    <citation type="journal article" date="1997" name="J. Biochem.">
        <title>Functions of characteristic Cys-Gly-His-Cys (CGHC) and Gln-Glu-Asp-Leu (QEDL) motifs of microsomal ER-60 protease.</title>
        <authorList>
            <person name="Urade R."/>
            <person name="Oda T."/>
            <person name="Ito H."/>
            <person name="Moriyama T."/>
            <person name="Utsumi S."/>
            <person name="Kito M."/>
        </authorList>
    </citation>
    <scope>SUBCELLULAR LOCATION</scope>
    <scope>MUTAGENESIS OF 502-GLN--LEU-505</scope>
    <scope>MOTIF</scope>
</reference>
<reference key="10">
    <citation type="journal article" date="1992" name="FEBS Lett.">
        <title>Inhibition by acidic phospholipids of protein degradation by ER-60 protease, a novel cysteine protease, of endoplasmic reticulum.</title>
        <authorList>
            <person name="Urade R."/>
            <person name="Kito M."/>
        </authorList>
    </citation>
    <scope>INHIBITION BY PHOSPHOLIPIDS</scope>
</reference>
<reference key="11">
    <citation type="journal article" date="2010" name="Asian J. Androl.">
        <title>Glucose-regulated protein precursor (GRP78) and tumor rejection antigen (GP96) are unique to hamster caput epididymal spermatozoa.</title>
        <authorList>
            <person name="Kameshwari D.B."/>
            <person name="Bhande S."/>
            <person name="Sundaram C.S."/>
            <person name="Kota V."/>
            <person name="Siva A.B."/>
            <person name="Shivaji S."/>
        </authorList>
    </citation>
    <scope>TISSUE SPECIFICITY</scope>
</reference>
<feature type="signal peptide" evidence="7">
    <location>
        <begin position="1"/>
        <end position="24"/>
    </location>
</feature>
<feature type="chain" id="PRO_0000034227" description="Protein disulfide-isomerase A3">
    <location>
        <begin position="25"/>
        <end position="505"/>
    </location>
</feature>
<feature type="domain" description="Thioredoxin 1" evidence="4">
    <location>
        <begin position="25"/>
        <end position="133"/>
    </location>
</feature>
<feature type="domain" description="Thioredoxin 2" evidence="4">
    <location>
        <begin position="343"/>
        <end position="485"/>
    </location>
</feature>
<feature type="region of interest" description="Disordered" evidence="5">
    <location>
        <begin position="484"/>
        <end position="505"/>
    </location>
</feature>
<feature type="short sequence motif" description="Prevents secretion from ER" evidence="9">
    <location>
        <begin position="502"/>
        <end position="505"/>
    </location>
</feature>
<feature type="compositionally biased region" description="Basic and acidic residues" evidence="5">
    <location>
        <begin position="491"/>
        <end position="505"/>
    </location>
</feature>
<feature type="active site" description="Nucleophile" evidence="3">
    <location>
        <position position="57"/>
    </location>
</feature>
<feature type="active site" description="Nucleophile" evidence="3">
    <location>
        <position position="60"/>
    </location>
</feature>
<feature type="active site" description="Nucleophile" evidence="3">
    <location>
        <position position="406"/>
    </location>
</feature>
<feature type="active site" description="Nucleophile" evidence="3">
    <location>
        <position position="409"/>
    </location>
</feature>
<feature type="site" description="Contributes to redox potential value" evidence="1">
    <location>
        <position position="58"/>
    </location>
</feature>
<feature type="site" description="Contributes to redox potential value" evidence="1">
    <location>
        <position position="59"/>
    </location>
</feature>
<feature type="site" description="Lowers pKa of C-terminal Cys of first active site" evidence="1">
    <location>
        <position position="119"/>
    </location>
</feature>
<feature type="site" description="Contributes to redox potential value" evidence="1">
    <location>
        <position position="407"/>
    </location>
</feature>
<feature type="site" description="Contributes to redox potential value" evidence="1">
    <location>
        <position position="408"/>
    </location>
</feature>
<feature type="site" description="Lowers pKa of C-terminal Cys of second active site" evidence="1">
    <location>
        <position position="471"/>
    </location>
</feature>
<feature type="modified residue" description="N6-methyllysine" evidence="3">
    <location>
        <position position="61"/>
    </location>
</feature>
<feature type="modified residue" description="N6-succinyllysine" evidence="2">
    <location>
        <position position="129"/>
    </location>
</feature>
<feature type="modified residue" description="N6-acetyllysine" evidence="2">
    <location>
        <position position="152"/>
    </location>
</feature>
<feature type="modified residue" description="N6-succinyllysine" evidence="2">
    <location>
        <position position="218"/>
    </location>
</feature>
<feature type="modified residue" description="N6-acetyllysine" evidence="2">
    <location>
        <position position="252"/>
    </location>
</feature>
<feature type="modified residue" description="Phosphothreonine" evidence="3">
    <location>
        <position position="319"/>
    </location>
</feature>
<feature type="modified residue" description="N6-acetyllysine" evidence="2">
    <location>
        <position position="362"/>
    </location>
</feature>
<feature type="modified residue" description="N6-acetyllysine" evidence="2">
    <location>
        <position position="494"/>
    </location>
</feature>
<feature type="disulfide bond" description="Redox-active; reversible" evidence="3 4">
    <location>
        <begin position="57"/>
        <end position="60"/>
    </location>
</feature>
<feature type="disulfide bond" description="Interchain (with TAPBP); in linked form; reversible" evidence="3">
    <location>
        <position position="57"/>
    </location>
</feature>
<feature type="disulfide bond" evidence="3">
    <location>
        <begin position="85"/>
        <end position="92"/>
    </location>
</feature>
<feature type="disulfide bond" description="Redox-active" evidence="3 4">
    <location>
        <begin position="406"/>
        <end position="409"/>
    </location>
</feature>
<feature type="mutagenesis site" description="Failure to prevent secretion from ER." evidence="9">
    <original>QEDL</original>
    <variation>AAGL</variation>
    <location>
        <begin position="502"/>
        <end position="505"/>
    </location>
</feature>
<feature type="mutagenesis site" description="Failure to prevent secretion from ER." evidence="9">
    <location>
        <begin position="502"/>
        <end position="505"/>
    </location>
</feature>
<feature type="sequence conflict" description="In Ref. 1; CAA30916." evidence="10" ref="1">
    <original>MRFSCLALLPGVA</original>
    <variation>MPSAALRCSRAWR</variation>
    <location>
        <begin position="1"/>
        <end position="13"/>
    </location>
</feature>
<feature type="sequence conflict" description="In Ref. 1; CAA30916." evidence="10" ref="1">
    <original>S</original>
    <variation>T</variation>
    <location>
        <position position="98"/>
    </location>
</feature>
<feature type="sequence conflict" description="In Ref. 1; CAA30916." evidence="10" ref="1">
    <original>IKKFIQESI</original>
    <variation>SRSLFRKA</variation>
    <location>
        <begin position="232"/>
        <end position="240"/>
    </location>
</feature>
<feature type="sequence conflict" description="In Ref. 2; BAA09695." evidence="10" ref="2">
    <original>F</original>
    <variation>L</variation>
    <location>
        <position position="476"/>
    </location>
</feature>
<organism>
    <name type="scientific">Rattus norvegicus</name>
    <name type="common">Rat</name>
    <dbReference type="NCBI Taxonomy" id="10116"/>
    <lineage>
        <taxon>Eukaryota</taxon>
        <taxon>Metazoa</taxon>
        <taxon>Chordata</taxon>
        <taxon>Craniata</taxon>
        <taxon>Vertebrata</taxon>
        <taxon>Euteleostomi</taxon>
        <taxon>Mammalia</taxon>
        <taxon>Eutheria</taxon>
        <taxon>Euarchontoglires</taxon>
        <taxon>Glires</taxon>
        <taxon>Rodentia</taxon>
        <taxon>Myomorpha</taxon>
        <taxon>Muroidea</taxon>
        <taxon>Muridae</taxon>
        <taxon>Murinae</taxon>
        <taxon>Rattus</taxon>
    </lineage>
</organism>
<name>PDIA3_RAT</name>
<sequence>MRFSCLALLPGVALLLASALLASASDVLELTDENFESRVSDTGSAGLMLVEFFAPWCGHCKRLAPEYEAAATRLKGIVPLAKVDCTANTNTCNKYGVSGYPTLKIFRDGEEAGAYDGPRTADGIVSHLKKQAGPASVPLRTEDEFKKFISDKDASVVGFFRDLFSDGHSEFLKAASNLRDNYRFAHTNVESLVKEYDDNGEGITIFRPLHLANKFEDKIVAYTEKKMTSGKIKKFIQESIFGLCPHMTEDNKDLIQGKDLLTAYYDVDYEKNTKGSNYWRNRVMMVAKTFLDAGHKLNFAVASRKTFSHELSDFGLESTTGEIPVVAIRTAKGEKFVMQEEFSRDGKALERFLQEYFDGNLKRYLKSEPIPETNEGPVKVVVAESFDDIVNAEDKDVLIEFYAPWCGHCKNLEPKYKELGEKLSKDPNIVIAKMDATANDVPSPYEVKGFPTIYFSPANKKLTPKKYEGGRELNDFISYLQREATNPPIIQEEKPKKKKKAQEDL</sequence>
<comment type="function">
    <text evidence="3">Protein disulfide isomerase that catalyzes the formation, isomerization, and reduction or oxidation of disulfide bonds in client proteins and functions as a protein folding chaperone. Core component of the major histocompatibility complex class I (MHC I) peptide loading complex where it functions as an essential folding chaperone for TAPBP. Through TAPBP, assists the dynamic assembly of the MHC I complex with high affinity antigens in the endoplasmic reticulum. Therefore, plays a crucial role in the presentation of antigens to cytotoxic T cells in adaptive immunity.</text>
</comment>
<comment type="catalytic activity">
    <reaction evidence="3">
        <text>Catalyzes the rearrangement of -S-S- bonds in proteins.</text>
        <dbReference type="EC" id="5.3.4.1"/>
    </reaction>
</comment>
<comment type="activity regulation">
    <text evidence="6">Seems to be inhibited by acidic phospholipids.</text>
</comment>
<comment type="subunit">
    <text evidence="2 3">Part of the major histocompatibility complex class I (MHC I) peptide loading complex composed of TAP1, TAP2, B2M, MHC heavy chain, TAPBP, PDIA3, and CALR. Interacts with ERP27 and CANX. Interacts with SERPINA2 and with SERPINA1 (By similarity). Interacts with ATP2A2 (By similarity).</text>
</comment>
<comment type="subcellular location">
    <subcellularLocation>
        <location evidence="3">Endoplasmic reticulum</location>
    </subcellularLocation>
    <subcellularLocation>
        <location evidence="9">Endoplasmic reticulum lumen</location>
    </subcellularLocation>
    <subcellularLocation>
        <location evidence="3">Melanosome</location>
    </subcellularLocation>
</comment>
<comment type="tissue specificity">
    <text evidence="8">In caput epididymal spermatozoa, detected in the head, mid and principal pieces. In cauda epididymal spermatozoa detected only in the acrosome (at protein level).</text>
</comment>
<comment type="PTM">
    <text evidence="3">Within the major histocompatibility complex class I (MHC I) peptide loading complex forms reversible disulfide-linked heterodimers with TAPBP as part of its protein folding chaperone activity. This is essential to assist the dynamic assembly of the MHC I complex with high affinity antigens in the endoplasmic reticulum.</text>
</comment>
<comment type="PTM">
    <text evidence="2">Phosphorylated.</text>
</comment>
<comment type="similarity">
    <text evidence="10">Belongs to the protein disulfide isomerase family.</text>
</comment>
<comment type="caution">
    <text evidence="11">Was originally thought to be a phosphatidyl-inositol 4,5-bisphosphate phosphodiesterase type I (phospholipase C-alpha) then was thought (PubMed:1321829, PubMed:1330685) to be a thiol protease.</text>
</comment>
<keyword id="KW-0007">Acetylation</keyword>
<keyword id="KW-1064">Adaptive immunity</keyword>
<keyword id="KW-0903">Direct protein sequencing</keyword>
<keyword id="KW-1015">Disulfide bond</keyword>
<keyword id="KW-0256">Endoplasmic reticulum</keyword>
<keyword id="KW-0391">Immunity</keyword>
<keyword id="KW-0413">Isomerase</keyword>
<keyword id="KW-0488">Methylation</keyword>
<keyword id="KW-0597">Phosphoprotein</keyword>
<keyword id="KW-0676">Redox-active center</keyword>
<keyword id="KW-1185">Reference proteome</keyword>
<keyword id="KW-0677">Repeat</keyword>
<keyword id="KW-0732">Signal</keyword>
<dbReference type="EC" id="5.3.4.1" evidence="3"/>
<dbReference type="EMBL" id="X12355">
    <property type="protein sequence ID" value="CAA30916.1"/>
    <property type="molecule type" value="mRNA"/>
</dbReference>
<dbReference type="EMBL" id="D63378">
    <property type="protein sequence ID" value="BAA09695.1"/>
    <property type="molecule type" value="mRNA"/>
</dbReference>
<dbReference type="EMBL" id="BC062393">
    <property type="protein sequence ID" value="AAH62393.1"/>
    <property type="molecule type" value="mRNA"/>
</dbReference>
<dbReference type="PIR" id="A28807">
    <property type="entry name" value="A28807"/>
</dbReference>
<dbReference type="PIR" id="A61354">
    <property type="entry name" value="A61354"/>
</dbReference>
<dbReference type="RefSeq" id="NP_059015.1">
    <property type="nucleotide sequence ID" value="NM_017319.1"/>
</dbReference>
<dbReference type="SMR" id="P11598"/>
<dbReference type="BioGRID" id="248111">
    <property type="interactions" value="5"/>
</dbReference>
<dbReference type="CORUM" id="P11598"/>
<dbReference type="FunCoup" id="P11598">
    <property type="interactions" value="2433"/>
</dbReference>
<dbReference type="IntAct" id="P11598">
    <property type="interactions" value="8"/>
</dbReference>
<dbReference type="MINT" id="P11598"/>
<dbReference type="STRING" id="10116.ENSRNOP00000020478"/>
<dbReference type="CarbonylDB" id="P11598"/>
<dbReference type="GlyGen" id="P11598">
    <property type="glycosylation" value="1 site, 1 O-linked glycan (1 site)"/>
</dbReference>
<dbReference type="iPTMnet" id="P11598"/>
<dbReference type="PhosphoSitePlus" id="P11598"/>
<dbReference type="SwissPalm" id="P11598"/>
<dbReference type="jPOST" id="P11598"/>
<dbReference type="PaxDb" id="10116-ENSRNOP00000020478"/>
<dbReference type="GeneID" id="29468"/>
<dbReference type="KEGG" id="rno:29468"/>
<dbReference type="UCSC" id="RGD:68430">
    <property type="organism name" value="rat"/>
</dbReference>
<dbReference type="AGR" id="RGD:68430"/>
<dbReference type="CTD" id="2923"/>
<dbReference type="RGD" id="68430">
    <property type="gene designation" value="Pdia3"/>
</dbReference>
<dbReference type="eggNOG" id="KOG0190">
    <property type="taxonomic scope" value="Eukaryota"/>
</dbReference>
<dbReference type="HOGENOM" id="CLU_025879_6_0_1"/>
<dbReference type="InParanoid" id="P11598"/>
<dbReference type="OrthoDB" id="427280at2759"/>
<dbReference type="PhylomeDB" id="P11598"/>
<dbReference type="TreeFam" id="TF106382"/>
<dbReference type="Reactome" id="R-RNO-1236974">
    <property type="pathway name" value="ER-Phagosome pathway"/>
</dbReference>
<dbReference type="Reactome" id="R-RNO-901042">
    <property type="pathway name" value="Calnexin/calreticulin cycle"/>
</dbReference>
<dbReference type="Reactome" id="R-RNO-983170">
    <property type="pathway name" value="Antigen Presentation: Folding, assembly and peptide loading of class I MHC"/>
</dbReference>
<dbReference type="PRO" id="PR:P11598"/>
<dbReference type="Proteomes" id="UP000002494">
    <property type="component" value="Unplaced"/>
</dbReference>
<dbReference type="GO" id="GO:0001669">
    <property type="term" value="C:acrosomal vesicle"/>
    <property type="evidence" value="ECO:0000314"/>
    <property type="project" value="RGD"/>
</dbReference>
<dbReference type="GO" id="GO:0016324">
    <property type="term" value="C:apical plasma membrane"/>
    <property type="evidence" value="ECO:0000314"/>
    <property type="project" value="RGD"/>
</dbReference>
<dbReference type="GO" id="GO:0009986">
    <property type="term" value="C:cell surface"/>
    <property type="evidence" value="ECO:0000314"/>
    <property type="project" value="RGD"/>
</dbReference>
<dbReference type="GO" id="GO:0005783">
    <property type="term" value="C:endoplasmic reticulum"/>
    <property type="evidence" value="ECO:0000250"/>
    <property type="project" value="UniProtKB"/>
</dbReference>
<dbReference type="GO" id="GO:0005788">
    <property type="term" value="C:endoplasmic reticulum lumen"/>
    <property type="evidence" value="ECO:0007669"/>
    <property type="project" value="UniProtKB-SubCell"/>
</dbReference>
<dbReference type="GO" id="GO:0005576">
    <property type="term" value="C:extracellular region"/>
    <property type="evidence" value="ECO:0000314"/>
    <property type="project" value="RGD"/>
</dbReference>
<dbReference type="GO" id="GO:0005615">
    <property type="term" value="C:extracellular space"/>
    <property type="evidence" value="ECO:0000314"/>
    <property type="project" value="RGD"/>
</dbReference>
<dbReference type="GO" id="GO:0042470">
    <property type="term" value="C:melanosome"/>
    <property type="evidence" value="ECO:0007669"/>
    <property type="project" value="UniProtKB-SubCell"/>
</dbReference>
<dbReference type="GO" id="GO:0042824">
    <property type="term" value="C:MHC class I peptide loading complex"/>
    <property type="evidence" value="ECO:0000314"/>
    <property type="project" value="UniProtKB"/>
</dbReference>
<dbReference type="GO" id="GO:0005790">
    <property type="term" value="C:smooth endoplasmic reticulum"/>
    <property type="evidence" value="ECO:0000314"/>
    <property type="project" value="UniProtKB"/>
</dbReference>
<dbReference type="GO" id="GO:0042825">
    <property type="term" value="C:TAP complex"/>
    <property type="evidence" value="ECO:0000314"/>
    <property type="project" value="RGD"/>
</dbReference>
<dbReference type="GO" id="GO:0061779">
    <property type="term" value="C:Tapasin-ERp57 complex"/>
    <property type="evidence" value="ECO:0000266"/>
    <property type="project" value="RGD"/>
</dbReference>
<dbReference type="GO" id="GO:0042802">
    <property type="term" value="F:identical protein binding"/>
    <property type="evidence" value="ECO:0000266"/>
    <property type="project" value="RGD"/>
</dbReference>
<dbReference type="GO" id="GO:0042288">
    <property type="term" value="F:MHC class I protein binding"/>
    <property type="evidence" value="ECO:0000314"/>
    <property type="project" value="RGD"/>
</dbReference>
<dbReference type="GO" id="GO:0008233">
    <property type="term" value="F:peptidase activity"/>
    <property type="evidence" value="ECO:0000314"/>
    <property type="project" value="RGD"/>
</dbReference>
<dbReference type="GO" id="GO:0003756">
    <property type="term" value="F:protein disulfide isomerase activity"/>
    <property type="evidence" value="ECO:0000318"/>
    <property type="project" value="GO_Central"/>
</dbReference>
<dbReference type="GO" id="GO:0019153">
    <property type="term" value="F:protein-disulfide reductase (glutathione) activity"/>
    <property type="evidence" value="ECO:0000315"/>
    <property type="project" value="RGD"/>
</dbReference>
<dbReference type="GO" id="GO:0015035">
    <property type="term" value="F:protein-disulfide reductase activity"/>
    <property type="evidence" value="ECO:0000266"/>
    <property type="project" value="RGD"/>
</dbReference>
<dbReference type="GO" id="GO:0002250">
    <property type="term" value="P:adaptive immune response"/>
    <property type="evidence" value="ECO:0007669"/>
    <property type="project" value="UniProtKB-KW"/>
</dbReference>
<dbReference type="GO" id="GO:0098761">
    <property type="term" value="P:cellular response to interleukin-7"/>
    <property type="evidence" value="ECO:0000266"/>
    <property type="project" value="RGD"/>
</dbReference>
<dbReference type="GO" id="GO:1904148">
    <property type="term" value="P:cellular response to nonylphenol"/>
    <property type="evidence" value="ECO:0000270"/>
    <property type="project" value="RGD"/>
</dbReference>
<dbReference type="GO" id="GO:0071560">
    <property type="term" value="P:cellular response to transforming growth factor beta stimulus"/>
    <property type="evidence" value="ECO:0000270"/>
    <property type="project" value="RGD"/>
</dbReference>
<dbReference type="GO" id="GO:0071305">
    <property type="term" value="P:cellular response to vitamin D"/>
    <property type="evidence" value="ECO:0000314"/>
    <property type="project" value="RGD"/>
</dbReference>
<dbReference type="GO" id="GO:0007623">
    <property type="term" value="P:circadian rhythm"/>
    <property type="evidence" value="ECO:0000270"/>
    <property type="project" value="RGD"/>
</dbReference>
<dbReference type="GO" id="GO:0097191">
    <property type="term" value="P:extrinsic apoptotic signaling pathway"/>
    <property type="evidence" value="ECO:0000266"/>
    <property type="project" value="RGD"/>
</dbReference>
<dbReference type="GO" id="GO:0002502">
    <property type="term" value="P:peptide antigen assembly with MHC class I protein complex"/>
    <property type="evidence" value="ECO:0000266"/>
    <property type="project" value="RGD"/>
</dbReference>
<dbReference type="GO" id="GO:0070527">
    <property type="term" value="P:platelet aggregation"/>
    <property type="evidence" value="ECO:0000266"/>
    <property type="project" value="RGD"/>
</dbReference>
<dbReference type="GO" id="GO:2001238">
    <property type="term" value="P:positive regulation of extrinsic apoptotic signaling pathway"/>
    <property type="evidence" value="ECO:0000266"/>
    <property type="project" value="RGD"/>
</dbReference>
<dbReference type="GO" id="GO:1903334">
    <property type="term" value="P:positive regulation of protein folding"/>
    <property type="evidence" value="ECO:0000314"/>
    <property type="project" value="RGD"/>
</dbReference>
<dbReference type="GO" id="GO:0006457">
    <property type="term" value="P:protein folding"/>
    <property type="evidence" value="ECO:0000318"/>
    <property type="project" value="GO_Central"/>
</dbReference>
<dbReference type="GO" id="GO:1901423">
    <property type="term" value="P:response to benzene"/>
    <property type="evidence" value="ECO:0000270"/>
    <property type="project" value="RGD"/>
</dbReference>
<dbReference type="GO" id="GO:0034976">
    <property type="term" value="P:response to endoplasmic reticulum stress"/>
    <property type="evidence" value="ECO:0000318"/>
    <property type="project" value="GO_Central"/>
</dbReference>
<dbReference type="GO" id="GO:0045471">
    <property type="term" value="P:response to ethanol"/>
    <property type="evidence" value="ECO:0000270"/>
    <property type="project" value="RGD"/>
</dbReference>
<dbReference type="GO" id="GO:0033595">
    <property type="term" value="P:response to genistein"/>
    <property type="evidence" value="ECO:0000270"/>
    <property type="project" value="RGD"/>
</dbReference>
<dbReference type="GO" id="GO:0055093">
    <property type="term" value="P:response to hyperoxia"/>
    <property type="evidence" value="ECO:0000270"/>
    <property type="project" value="RGD"/>
</dbReference>
<dbReference type="GO" id="GO:0001666">
    <property type="term" value="P:response to hypoxia"/>
    <property type="evidence" value="ECO:0000270"/>
    <property type="project" value="RGD"/>
</dbReference>
<dbReference type="GO" id="GO:0002931">
    <property type="term" value="P:response to ischemia"/>
    <property type="evidence" value="ECO:0000270"/>
    <property type="project" value="RGD"/>
</dbReference>
<dbReference type="GO" id="GO:0044321">
    <property type="term" value="P:response to leptin"/>
    <property type="evidence" value="ECO:0000270"/>
    <property type="project" value="RGD"/>
</dbReference>
<dbReference type="GO" id="GO:0031667">
    <property type="term" value="P:response to nutrient levels"/>
    <property type="evidence" value="ECO:0000270"/>
    <property type="project" value="RGD"/>
</dbReference>
<dbReference type="CDD" id="cd02995">
    <property type="entry name" value="PDI_a_PDI_a'_C"/>
    <property type="match status" value="1"/>
</dbReference>
<dbReference type="CDD" id="cd03073">
    <property type="entry name" value="PDI_b'_ERp72_ERp57"/>
    <property type="match status" value="1"/>
</dbReference>
<dbReference type="CDD" id="cd03069">
    <property type="entry name" value="PDI_b_ERp57"/>
    <property type="match status" value="1"/>
</dbReference>
<dbReference type="FunFam" id="3.40.30.10:FF:000045">
    <property type="entry name" value="Disulfide-isomerase A3"/>
    <property type="match status" value="1"/>
</dbReference>
<dbReference type="FunFam" id="3.40.30.10:FF:000054">
    <property type="entry name" value="Disulfide-isomerase A3"/>
    <property type="match status" value="1"/>
</dbReference>
<dbReference type="FunFam" id="3.40.30.10:FF:000077">
    <property type="entry name" value="Protein disulfide-isomerase"/>
    <property type="match status" value="1"/>
</dbReference>
<dbReference type="FunFam" id="3.40.30.10:FF:000017">
    <property type="entry name" value="Protein disulfide-isomerase A4"/>
    <property type="match status" value="1"/>
</dbReference>
<dbReference type="Gene3D" id="3.40.30.10">
    <property type="entry name" value="Glutaredoxin"/>
    <property type="match status" value="4"/>
</dbReference>
<dbReference type="InterPro" id="IPR005788">
    <property type="entry name" value="PDI_thioredoxin-like_dom"/>
</dbReference>
<dbReference type="InterPro" id="IPR041868">
    <property type="entry name" value="PDIA3_PDI_b"/>
</dbReference>
<dbReference type="InterPro" id="IPR005792">
    <property type="entry name" value="Prot_disulphide_isomerase"/>
</dbReference>
<dbReference type="InterPro" id="IPR036249">
    <property type="entry name" value="Thioredoxin-like_sf"/>
</dbReference>
<dbReference type="InterPro" id="IPR017937">
    <property type="entry name" value="Thioredoxin_CS"/>
</dbReference>
<dbReference type="InterPro" id="IPR013766">
    <property type="entry name" value="Thioredoxin_domain"/>
</dbReference>
<dbReference type="NCBIfam" id="TIGR01130">
    <property type="entry name" value="ER_PDI_fam"/>
    <property type="match status" value="1"/>
</dbReference>
<dbReference type="NCBIfam" id="TIGR01126">
    <property type="entry name" value="pdi_dom"/>
    <property type="match status" value="2"/>
</dbReference>
<dbReference type="PANTHER" id="PTHR18929">
    <property type="entry name" value="PROTEIN DISULFIDE ISOMERASE"/>
    <property type="match status" value="1"/>
</dbReference>
<dbReference type="PANTHER" id="PTHR18929:SF132">
    <property type="entry name" value="PROTEIN DISULFIDE-ISOMERASE A3"/>
    <property type="match status" value="1"/>
</dbReference>
<dbReference type="Pfam" id="PF00085">
    <property type="entry name" value="Thioredoxin"/>
    <property type="match status" value="2"/>
</dbReference>
<dbReference type="Pfam" id="PF13848">
    <property type="entry name" value="Thioredoxin_6"/>
    <property type="match status" value="1"/>
</dbReference>
<dbReference type="PRINTS" id="PR00421">
    <property type="entry name" value="THIOREDOXIN"/>
</dbReference>
<dbReference type="SUPFAM" id="SSF52833">
    <property type="entry name" value="Thioredoxin-like"/>
    <property type="match status" value="4"/>
</dbReference>
<dbReference type="PROSITE" id="PS00194">
    <property type="entry name" value="THIOREDOXIN_1"/>
    <property type="match status" value="2"/>
</dbReference>
<dbReference type="PROSITE" id="PS51352">
    <property type="entry name" value="THIOREDOXIN_2"/>
    <property type="match status" value="2"/>
</dbReference>
<protein>
    <recommendedName>
        <fullName>Protein disulfide-isomerase A3</fullName>
        <ecNumber evidence="3">5.3.4.1</ecNumber>
    </recommendedName>
    <alternativeName>
        <fullName>58 kDa glucose-regulated protein</fullName>
    </alternativeName>
    <alternativeName>
        <fullName>58 kDa microsomal protein</fullName>
        <shortName>p58</shortName>
    </alternativeName>
    <alternativeName>
        <fullName>Disulfide isomerase ER-60</fullName>
    </alternativeName>
    <alternativeName>
        <fullName>Endoplasmic reticulum resident protein 57</fullName>
        <shortName>ER protein 57</shortName>
        <shortName>ERp57</shortName>
    </alternativeName>
    <alternativeName>
        <fullName>Endoplasmic reticulum resident protein 60</fullName>
        <shortName>ER protein 60</shortName>
        <shortName>ERp60</shortName>
    </alternativeName>
    <alternativeName>
        <fullName>HIP-70</fullName>
    </alternativeName>
    <alternativeName>
        <fullName>Q-2</fullName>
    </alternativeName>
</protein>
<accession>P11598</accession>
<gene>
    <name type="primary">Pdia3</name>
    <name type="synonym">Erp60</name>
    <name type="synonym">Grp58</name>
</gene>
<proteinExistence type="evidence at protein level"/>